<protein>
    <recommendedName>
        <fullName evidence="1">Arginine repressor</fullName>
    </recommendedName>
</protein>
<organism>
    <name type="scientific">Klebsiella pneumoniae (strain 342)</name>
    <dbReference type="NCBI Taxonomy" id="507522"/>
    <lineage>
        <taxon>Bacteria</taxon>
        <taxon>Pseudomonadati</taxon>
        <taxon>Pseudomonadota</taxon>
        <taxon>Gammaproteobacteria</taxon>
        <taxon>Enterobacterales</taxon>
        <taxon>Enterobacteriaceae</taxon>
        <taxon>Klebsiella/Raoultella group</taxon>
        <taxon>Klebsiella</taxon>
        <taxon>Klebsiella pneumoniae complex</taxon>
    </lineage>
</organism>
<gene>
    <name evidence="1" type="primary">argR</name>
    <name type="ordered locus">KPK_0475</name>
</gene>
<comment type="function">
    <text evidence="1">Regulates arginine biosynthesis genes.</text>
</comment>
<comment type="pathway">
    <text>Amino-acid biosynthesis; L-arginine biosynthesis [regulation].</text>
</comment>
<comment type="subcellular location">
    <subcellularLocation>
        <location evidence="1">Cytoplasm</location>
    </subcellularLocation>
</comment>
<comment type="similarity">
    <text evidence="1">Belongs to the ArgR family.</text>
</comment>
<dbReference type="EMBL" id="CP000964">
    <property type="protein sequence ID" value="ACI08418.1"/>
    <property type="molecule type" value="Genomic_DNA"/>
</dbReference>
<dbReference type="SMR" id="B5XSQ5"/>
<dbReference type="KEGG" id="kpe:KPK_0475"/>
<dbReference type="HOGENOM" id="CLU_097103_2_0_6"/>
<dbReference type="UniPathway" id="UPA00068"/>
<dbReference type="Proteomes" id="UP000001734">
    <property type="component" value="Chromosome"/>
</dbReference>
<dbReference type="GO" id="GO:0005737">
    <property type="term" value="C:cytoplasm"/>
    <property type="evidence" value="ECO:0007669"/>
    <property type="project" value="UniProtKB-SubCell"/>
</dbReference>
<dbReference type="GO" id="GO:0034618">
    <property type="term" value="F:arginine binding"/>
    <property type="evidence" value="ECO:0007669"/>
    <property type="project" value="InterPro"/>
</dbReference>
<dbReference type="GO" id="GO:0003677">
    <property type="term" value="F:DNA binding"/>
    <property type="evidence" value="ECO:0007669"/>
    <property type="project" value="UniProtKB-KW"/>
</dbReference>
<dbReference type="GO" id="GO:0003700">
    <property type="term" value="F:DNA-binding transcription factor activity"/>
    <property type="evidence" value="ECO:0007669"/>
    <property type="project" value="UniProtKB-UniRule"/>
</dbReference>
<dbReference type="GO" id="GO:0006526">
    <property type="term" value="P:L-arginine biosynthetic process"/>
    <property type="evidence" value="ECO:0007669"/>
    <property type="project" value="UniProtKB-UniPathway"/>
</dbReference>
<dbReference type="GO" id="GO:0051259">
    <property type="term" value="P:protein complex oligomerization"/>
    <property type="evidence" value="ECO:0007669"/>
    <property type="project" value="InterPro"/>
</dbReference>
<dbReference type="GO" id="GO:1900079">
    <property type="term" value="P:regulation of arginine biosynthetic process"/>
    <property type="evidence" value="ECO:0007669"/>
    <property type="project" value="UniProtKB-UniRule"/>
</dbReference>
<dbReference type="FunFam" id="1.10.10.10:FF:000074">
    <property type="entry name" value="Arginine repressor"/>
    <property type="match status" value="1"/>
</dbReference>
<dbReference type="FunFam" id="3.30.1360.40:FF:000004">
    <property type="entry name" value="Arginine repressor"/>
    <property type="match status" value="1"/>
</dbReference>
<dbReference type="Gene3D" id="3.30.1360.40">
    <property type="match status" value="1"/>
</dbReference>
<dbReference type="Gene3D" id="1.10.10.10">
    <property type="entry name" value="Winged helix-like DNA-binding domain superfamily/Winged helix DNA-binding domain"/>
    <property type="match status" value="1"/>
</dbReference>
<dbReference type="HAMAP" id="MF_00173">
    <property type="entry name" value="Arg_repressor"/>
    <property type="match status" value="1"/>
</dbReference>
<dbReference type="InterPro" id="IPR001669">
    <property type="entry name" value="Arg_repress"/>
</dbReference>
<dbReference type="InterPro" id="IPR020899">
    <property type="entry name" value="Arg_repress_C"/>
</dbReference>
<dbReference type="InterPro" id="IPR036251">
    <property type="entry name" value="Arg_repress_C_sf"/>
</dbReference>
<dbReference type="InterPro" id="IPR020900">
    <property type="entry name" value="Arg_repress_DNA-bd"/>
</dbReference>
<dbReference type="InterPro" id="IPR036388">
    <property type="entry name" value="WH-like_DNA-bd_sf"/>
</dbReference>
<dbReference type="InterPro" id="IPR036390">
    <property type="entry name" value="WH_DNA-bd_sf"/>
</dbReference>
<dbReference type="NCBIfam" id="TIGR01529">
    <property type="entry name" value="argR_whole"/>
    <property type="match status" value="1"/>
</dbReference>
<dbReference type="NCBIfam" id="NF003457">
    <property type="entry name" value="PRK05066.1"/>
    <property type="match status" value="1"/>
</dbReference>
<dbReference type="PANTHER" id="PTHR34471">
    <property type="entry name" value="ARGININE REPRESSOR"/>
    <property type="match status" value="1"/>
</dbReference>
<dbReference type="PANTHER" id="PTHR34471:SF1">
    <property type="entry name" value="ARGININE REPRESSOR"/>
    <property type="match status" value="1"/>
</dbReference>
<dbReference type="Pfam" id="PF01316">
    <property type="entry name" value="Arg_repressor"/>
    <property type="match status" value="1"/>
</dbReference>
<dbReference type="Pfam" id="PF02863">
    <property type="entry name" value="Arg_repressor_C"/>
    <property type="match status" value="1"/>
</dbReference>
<dbReference type="PRINTS" id="PR01467">
    <property type="entry name" value="ARGREPRESSOR"/>
</dbReference>
<dbReference type="SUPFAM" id="SSF55252">
    <property type="entry name" value="C-terminal domain of arginine repressor"/>
    <property type="match status" value="1"/>
</dbReference>
<dbReference type="SUPFAM" id="SSF46785">
    <property type="entry name" value="Winged helix' DNA-binding domain"/>
    <property type="match status" value="1"/>
</dbReference>
<proteinExistence type="inferred from homology"/>
<reference key="1">
    <citation type="journal article" date="2008" name="PLoS Genet.">
        <title>Complete genome sequence of the N2-fixing broad host range endophyte Klebsiella pneumoniae 342 and virulence predictions verified in mice.</title>
        <authorList>
            <person name="Fouts D.E."/>
            <person name="Tyler H.L."/>
            <person name="DeBoy R.T."/>
            <person name="Daugherty S."/>
            <person name="Ren Q."/>
            <person name="Badger J.H."/>
            <person name="Durkin A.S."/>
            <person name="Huot H."/>
            <person name="Shrivastava S."/>
            <person name="Kothari S."/>
            <person name="Dodson R.J."/>
            <person name="Mohamoud Y."/>
            <person name="Khouri H."/>
            <person name="Roesch L.F.W."/>
            <person name="Krogfelt K.A."/>
            <person name="Struve C."/>
            <person name="Triplett E.W."/>
            <person name="Methe B.A."/>
        </authorList>
    </citation>
    <scope>NUCLEOTIDE SEQUENCE [LARGE SCALE GENOMIC DNA]</scope>
    <source>
        <strain>342</strain>
    </source>
</reference>
<accession>B5XSQ5</accession>
<sequence>MRSSAKQEELVKAFKALLKEEKFSSQGEIVQALQEEGFENINQSKVSRMLTKFGAVRTRNAKMEMVYCLPAELGVPTTSSPLKNLVLDIDYNDAVVVIHTSPGAAQLIARLLDSLGKAEGILGSIAGDDTIFTTPARGFTVKDLHDAILVLFEQEL</sequence>
<evidence type="ECO:0000255" key="1">
    <source>
        <dbReference type="HAMAP-Rule" id="MF_00173"/>
    </source>
</evidence>
<feature type="chain" id="PRO_1000097875" description="Arginine repressor">
    <location>
        <begin position="1"/>
        <end position="156"/>
    </location>
</feature>
<keyword id="KW-0028">Amino-acid biosynthesis</keyword>
<keyword id="KW-0055">Arginine biosynthesis</keyword>
<keyword id="KW-0963">Cytoplasm</keyword>
<keyword id="KW-0238">DNA-binding</keyword>
<keyword id="KW-0678">Repressor</keyword>
<keyword id="KW-0804">Transcription</keyword>
<keyword id="KW-0805">Transcription regulation</keyword>
<name>ARGR_KLEP3</name>